<proteinExistence type="inferred from homology"/>
<feature type="chain" id="PRO_0000376099" description="NADH-quinone oxidoreductase subunit B 2">
    <location>
        <begin position="1"/>
        <end position="231"/>
    </location>
</feature>
<feature type="region of interest" description="Disordered" evidence="2">
    <location>
        <begin position="207"/>
        <end position="231"/>
    </location>
</feature>
<feature type="compositionally biased region" description="Basic and acidic residues" evidence="2">
    <location>
        <begin position="207"/>
        <end position="219"/>
    </location>
</feature>
<feature type="binding site" evidence="1">
    <location>
        <position position="74"/>
    </location>
    <ligand>
        <name>[4Fe-4S] cluster</name>
        <dbReference type="ChEBI" id="CHEBI:49883"/>
    </ligand>
</feature>
<feature type="binding site" evidence="1">
    <location>
        <position position="75"/>
    </location>
    <ligand>
        <name>[4Fe-4S] cluster</name>
        <dbReference type="ChEBI" id="CHEBI:49883"/>
    </ligand>
</feature>
<feature type="binding site" evidence="1">
    <location>
        <position position="140"/>
    </location>
    <ligand>
        <name>[4Fe-4S] cluster</name>
        <dbReference type="ChEBI" id="CHEBI:49883"/>
    </ligand>
</feature>
<feature type="binding site" evidence="1">
    <location>
        <position position="169"/>
    </location>
    <ligand>
        <name>[4Fe-4S] cluster</name>
        <dbReference type="ChEBI" id="CHEBI:49883"/>
    </ligand>
</feature>
<protein>
    <recommendedName>
        <fullName evidence="1">NADH-quinone oxidoreductase subunit B 2</fullName>
        <ecNumber evidence="1">7.1.1.-</ecNumber>
    </recommendedName>
    <alternativeName>
        <fullName evidence="1">NADH dehydrogenase I subunit B 2</fullName>
    </alternativeName>
    <alternativeName>
        <fullName evidence="1">NDH-1 subunit B 2</fullName>
    </alternativeName>
</protein>
<dbReference type="EC" id="7.1.1.-" evidence="1"/>
<dbReference type="EMBL" id="CP000697">
    <property type="protein sequence ID" value="ABQ30331.1"/>
    <property type="molecule type" value="Genomic_DNA"/>
</dbReference>
<dbReference type="RefSeq" id="WP_007422597.1">
    <property type="nucleotide sequence ID" value="NC_009484.1"/>
</dbReference>
<dbReference type="SMR" id="A5FXJ9"/>
<dbReference type="STRING" id="349163.Acry_1119"/>
<dbReference type="KEGG" id="acr:Acry_1119"/>
<dbReference type="eggNOG" id="COG0377">
    <property type="taxonomic scope" value="Bacteria"/>
</dbReference>
<dbReference type="HOGENOM" id="CLU_055737_7_3_5"/>
<dbReference type="Proteomes" id="UP000000245">
    <property type="component" value="Chromosome"/>
</dbReference>
<dbReference type="GO" id="GO:0005886">
    <property type="term" value="C:plasma membrane"/>
    <property type="evidence" value="ECO:0007669"/>
    <property type="project" value="UniProtKB-SubCell"/>
</dbReference>
<dbReference type="GO" id="GO:0045271">
    <property type="term" value="C:respiratory chain complex I"/>
    <property type="evidence" value="ECO:0007669"/>
    <property type="project" value="TreeGrafter"/>
</dbReference>
<dbReference type="GO" id="GO:0051539">
    <property type="term" value="F:4 iron, 4 sulfur cluster binding"/>
    <property type="evidence" value="ECO:0007669"/>
    <property type="project" value="UniProtKB-KW"/>
</dbReference>
<dbReference type="GO" id="GO:0005506">
    <property type="term" value="F:iron ion binding"/>
    <property type="evidence" value="ECO:0007669"/>
    <property type="project" value="UniProtKB-UniRule"/>
</dbReference>
<dbReference type="GO" id="GO:0008137">
    <property type="term" value="F:NADH dehydrogenase (ubiquinone) activity"/>
    <property type="evidence" value="ECO:0007669"/>
    <property type="project" value="InterPro"/>
</dbReference>
<dbReference type="GO" id="GO:0050136">
    <property type="term" value="F:NADH:ubiquinone reductase (non-electrogenic) activity"/>
    <property type="evidence" value="ECO:0007669"/>
    <property type="project" value="UniProtKB-UniRule"/>
</dbReference>
<dbReference type="GO" id="GO:0048038">
    <property type="term" value="F:quinone binding"/>
    <property type="evidence" value="ECO:0007669"/>
    <property type="project" value="UniProtKB-KW"/>
</dbReference>
<dbReference type="GO" id="GO:0009060">
    <property type="term" value="P:aerobic respiration"/>
    <property type="evidence" value="ECO:0007669"/>
    <property type="project" value="TreeGrafter"/>
</dbReference>
<dbReference type="GO" id="GO:0015990">
    <property type="term" value="P:electron transport coupled proton transport"/>
    <property type="evidence" value="ECO:0007669"/>
    <property type="project" value="TreeGrafter"/>
</dbReference>
<dbReference type="FunFam" id="3.40.50.12280:FF:000002">
    <property type="entry name" value="NADH-quinone oxidoreductase subunit B"/>
    <property type="match status" value="1"/>
</dbReference>
<dbReference type="Gene3D" id="3.40.50.12280">
    <property type="match status" value="1"/>
</dbReference>
<dbReference type="HAMAP" id="MF_01356">
    <property type="entry name" value="NDH1_NuoB"/>
    <property type="match status" value="1"/>
</dbReference>
<dbReference type="InterPro" id="IPR006137">
    <property type="entry name" value="NADH_UbQ_OxRdtase-like_20kDa"/>
</dbReference>
<dbReference type="InterPro" id="IPR006138">
    <property type="entry name" value="NADH_UQ_OxRdtase_20Kd_su"/>
</dbReference>
<dbReference type="NCBIfam" id="TIGR01957">
    <property type="entry name" value="nuoB_fam"/>
    <property type="match status" value="1"/>
</dbReference>
<dbReference type="NCBIfam" id="NF005012">
    <property type="entry name" value="PRK06411.1"/>
    <property type="match status" value="1"/>
</dbReference>
<dbReference type="PANTHER" id="PTHR11995">
    <property type="entry name" value="NADH DEHYDROGENASE"/>
    <property type="match status" value="1"/>
</dbReference>
<dbReference type="PANTHER" id="PTHR11995:SF14">
    <property type="entry name" value="NADH DEHYDROGENASE [UBIQUINONE] IRON-SULFUR PROTEIN 7, MITOCHONDRIAL"/>
    <property type="match status" value="1"/>
</dbReference>
<dbReference type="Pfam" id="PF01058">
    <property type="entry name" value="Oxidored_q6"/>
    <property type="match status" value="1"/>
</dbReference>
<dbReference type="SUPFAM" id="SSF56770">
    <property type="entry name" value="HydA/Nqo6-like"/>
    <property type="match status" value="1"/>
</dbReference>
<dbReference type="PROSITE" id="PS01150">
    <property type="entry name" value="COMPLEX1_20K"/>
    <property type="match status" value="1"/>
</dbReference>
<organism>
    <name type="scientific">Acidiphilium cryptum (strain JF-5)</name>
    <dbReference type="NCBI Taxonomy" id="349163"/>
    <lineage>
        <taxon>Bacteria</taxon>
        <taxon>Pseudomonadati</taxon>
        <taxon>Pseudomonadota</taxon>
        <taxon>Alphaproteobacteria</taxon>
        <taxon>Acetobacterales</taxon>
        <taxon>Acidocellaceae</taxon>
        <taxon>Acidiphilium</taxon>
    </lineage>
</organism>
<reference key="1">
    <citation type="submission" date="2007-05" db="EMBL/GenBank/DDBJ databases">
        <title>Complete sequence of chromosome of Acidiphilium cryptum JF-5.</title>
        <authorList>
            <consortium name="US DOE Joint Genome Institute"/>
            <person name="Copeland A."/>
            <person name="Lucas S."/>
            <person name="Lapidus A."/>
            <person name="Barry K."/>
            <person name="Detter J.C."/>
            <person name="Glavina del Rio T."/>
            <person name="Hammon N."/>
            <person name="Israni S."/>
            <person name="Dalin E."/>
            <person name="Tice H."/>
            <person name="Pitluck S."/>
            <person name="Sims D."/>
            <person name="Brettin T."/>
            <person name="Bruce D."/>
            <person name="Han C."/>
            <person name="Schmutz J."/>
            <person name="Larimer F."/>
            <person name="Land M."/>
            <person name="Hauser L."/>
            <person name="Kyrpides N."/>
            <person name="Kim E."/>
            <person name="Magnuson T."/>
            <person name="Richardson P."/>
        </authorList>
    </citation>
    <scope>NUCLEOTIDE SEQUENCE [LARGE SCALE GENOMIC DNA]</scope>
    <source>
        <strain>JF-5</strain>
    </source>
</reference>
<comment type="function">
    <text evidence="1">NDH-1 shuttles electrons from NADH, via FMN and iron-sulfur (Fe-S) centers, to quinones in the respiratory chain. The immediate electron acceptor for the enzyme in this species is believed to be ubiquinone. Couples the redox reaction to proton translocation (for every two electrons transferred, four hydrogen ions are translocated across the cytoplasmic membrane), and thus conserves the redox energy in a proton gradient.</text>
</comment>
<comment type="catalytic activity">
    <reaction evidence="1">
        <text>a quinone + NADH + 5 H(+)(in) = a quinol + NAD(+) + 4 H(+)(out)</text>
        <dbReference type="Rhea" id="RHEA:57888"/>
        <dbReference type="ChEBI" id="CHEBI:15378"/>
        <dbReference type="ChEBI" id="CHEBI:24646"/>
        <dbReference type="ChEBI" id="CHEBI:57540"/>
        <dbReference type="ChEBI" id="CHEBI:57945"/>
        <dbReference type="ChEBI" id="CHEBI:132124"/>
    </reaction>
</comment>
<comment type="cofactor">
    <cofactor evidence="1">
        <name>[4Fe-4S] cluster</name>
        <dbReference type="ChEBI" id="CHEBI:49883"/>
    </cofactor>
    <text evidence="1">Binds 1 [4Fe-4S] cluster.</text>
</comment>
<comment type="subunit">
    <text evidence="1">NDH-1 is composed of 14 different subunits. Subunits NuoB, C, D, E, F, and G constitute the peripheral sector of the complex.</text>
</comment>
<comment type="subcellular location">
    <subcellularLocation>
        <location evidence="1">Cell inner membrane</location>
        <topology evidence="1">Peripheral membrane protein</topology>
        <orientation evidence="1">Cytoplasmic side</orientation>
    </subcellularLocation>
</comment>
<comment type="similarity">
    <text evidence="1">Belongs to the complex I 20 kDa subunit family.</text>
</comment>
<keyword id="KW-0004">4Fe-4S</keyword>
<keyword id="KW-0997">Cell inner membrane</keyword>
<keyword id="KW-1003">Cell membrane</keyword>
<keyword id="KW-0408">Iron</keyword>
<keyword id="KW-0411">Iron-sulfur</keyword>
<keyword id="KW-0472">Membrane</keyword>
<keyword id="KW-0479">Metal-binding</keyword>
<keyword id="KW-0520">NAD</keyword>
<keyword id="KW-0874">Quinone</keyword>
<keyword id="KW-1185">Reference proteome</keyword>
<keyword id="KW-1278">Translocase</keyword>
<keyword id="KW-0813">Transport</keyword>
<keyword id="KW-0830">Ubiquinone</keyword>
<sequence length="231" mass="25040">MRFTFGKGATGQQLSTTAPLLRGLGTAGQPAAPSPGGGTFTDAVRRNVALGRLEDMVAWGRKYSIWPFNFGLSCCYVEMATAFTSKFDIARFGSEVLRATPREADLIVISGTVFVKMAPVIKYLYDQMLEPRWVISMGACANSGGMYDIYAVVQGADSFLPVDVYVPGCPPRPDALLEGLMLLQNSIGSERRPLSWLVGPNGAEKIERPSFRDLKHQERQAAGSLPTPDSV</sequence>
<gene>
    <name evidence="1" type="primary">nuoB2</name>
    <name type="ordered locus">Acry_1119</name>
</gene>
<name>NUOB2_ACICJ</name>
<evidence type="ECO:0000255" key="1">
    <source>
        <dbReference type="HAMAP-Rule" id="MF_01356"/>
    </source>
</evidence>
<evidence type="ECO:0000256" key="2">
    <source>
        <dbReference type="SAM" id="MobiDB-lite"/>
    </source>
</evidence>
<accession>A5FXJ9</accession>